<protein>
    <recommendedName>
        <fullName evidence="3">Peptide PGLa-R6</fullName>
    </recommendedName>
</protein>
<name>PGLR6_XENRU</name>
<sequence>GMASTAGSVLGKLAKTAIGIL</sequence>
<organism evidence="3">
    <name type="scientific">Xenopus ruwenzoriensis</name>
    <name type="common">Uganda clawed frog</name>
    <dbReference type="NCBI Taxonomy" id="105430"/>
    <lineage>
        <taxon>Eukaryota</taxon>
        <taxon>Metazoa</taxon>
        <taxon>Chordata</taxon>
        <taxon>Craniata</taxon>
        <taxon>Vertebrata</taxon>
        <taxon>Euteleostomi</taxon>
        <taxon>Amphibia</taxon>
        <taxon>Batrachia</taxon>
        <taxon>Anura</taxon>
        <taxon>Pipoidea</taxon>
        <taxon>Pipidae</taxon>
        <taxon>Xenopodinae</taxon>
        <taxon>Xenopus</taxon>
        <taxon>Xenopus</taxon>
    </lineage>
</organism>
<dbReference type="GO" id="GO:0005576">
    <property type="term" value="C:extracellular region"/>
    <property type="evidence" value="ECO:0007669"/>
    <property type="project" value="UniProtKB-SubCell"/>
</dbReference>
<dbReference type="GO" id="GO:0006952">
    <property type="term" value="P:defense response"/>
    <property type="evidence" value="ECO:0007669"/>
    <property type="project" value="UniProtKB-KW"/>
</dbReference>
<proteinExistence type="evidence at protein level"/>
<reference evidence="4" key="1">
    <citation type="journal article" date="2016" name="Comp. Biochem. Physiol.">
        <title>Peptidomic analysis of the extensive array of host-defense peptides in skin secretions of the dodecaploid frog Xenopus ruwenzoriensis (Pipidae).</title>
        <authorList>
            <person name="Coquet L."/>
            <person name="Kolodziejek J."/>
            <person name="Jouenne T."/>
            <person name="Nowotny N."/>
            <person name="King J.D."/>
            <person name="Conlon J.M."/>
        </authorList>
    </citation>
    <scope>PROTEIN SEQUENCE</scope>
    <scope>SUBCELLULAR LOCATION</scope>
    <scope>MASS SPECTROMETRY</scope>
    <scope>AMIDATION AT LEU-21</scope>
    <source>
        <tissue evidence="3">Skin secretion</tissue>
    </source>
</reference>
<comment type="function">
    <text evidence="1">Antimicrobial peptide.</text>
</comment>
<comment type="subcellular location">
    <subcellularLocation>
        <location evidence="2">Secreted</location>
    </subcellularLocation>
</comment>
<comment type="tissue specificity">
    <text evidence="5">Expressed by the skin glands.</text>
</comment>
<comment type="mass spectrometry"/>
<comment type="similarity">
    <text evidence="4">Belongs to the gastrin/cholecystokinin family. Magainin subfamily.</text>
</comment>
<accession>C0HKP4</accession>
<keyword id="KW-0027">Amidation</keyword>
<keyword id="KW-0878">Amphibian defense peptide</keyword>
<keyword id="KW-0929">Antimicrobial</keyword>
<keyword id="KW-0903">Direct protein sequencing</keyword>
<keyword id="KW-0964">Secreted</keyword>
<evidence type="ECO:0000250" key="1">
    <source>
        <dbReference type="UniProtKB" id="C0HK87"/>
    </source>
</evidence>
<evidence type="ECO:0000269" key="2">
    <source>
    </source>
</evidence>
<evidence type="ECO:0000303" key="3">
    <source>
    </source>
</evidence>
<evidence type="ECO:0000305" key="4"/>
<evidence type="ECO:0000305" key="5">
    <source>
    </source>
</evidence>
<feature type="peptide" id="PRO_0000440931" description="Peptide PGLa-R6" evidence="2">
    <location>
        <begin position="1"/>
        <end position="21"/>
    </location>
</feature>
<feature type="modified residue" description="Leucine amide" evidence="2">
    <location>
        <position position="21"/>
    </location>
</feature>